<evidence type="ECO:0000255" key="1">
    <source>
        <dbReference type="HAMAP-Rule" id="MF_00040"/>
    </source>
</evidence>
<evidence type="ECO:0000256" key="2">
    <source>
        <dbReference type="SAM" id="MobiDB-lite"/>
    </source>
</evidence>
<gene>
    <name evidence="1" type="primary">frr</name>
    <name type="ordered locus">Mjls_1985</name>
</gene>
<sequence>MIDETLFDAEEKMEKAVSVARDDLSSIRTGRANPGMFSRINVDYYGATTPITQLSSINVPEARMVVIKPYEANQLRNIEDAIRNSDLGVNPTNDGNIIRVSIPQLTEERRRDLVKQAKAKGEDAKVSVRNIRRKAMEELARIKKDGEAGEDEVSRAEKDLDKTTHTYTHQIDELVKHKEGELLEV</sequence>
<dbReference type="EMBL" id="CP000580">
    <property type="protein sequence ID" value="ABN97772.1"/>
    <property type="molecule type" value="Genomic_DNA"/>
</dbReference>
<dbReference type="SMR" id="A3PXZ5"/>
<dbReference type="KEGG" id="mjl:Mjls_1985"/>
<dbReference type="HOGENOM" id="CLU_073981_2_0_11"/>
<dbReference type="BioCyc" id="MSP164757:G1G8C-2005-MONOMER"/>
<dbReference type="GO" id="GO:0005737">
    <property type="term" value="C:cytoplasm"/>
    <property type="evidence" value="ECO:0007669"/>
    <property type="project" value="UniProtKB-SubCell"/>
</dbReference>
<dbReference type="GO" id="GO:0043023">
    <property type="term" value="F:ribosomal large subunit binding"/>
    <property type="evidence" value="ECO:0007669"/>
    <property type="project" value="TreeGrafter"/>
</dbReference>
<dbReference type="GO" id="GO:0006415">
    <property type="term" value="P:translational termination"/>
    <property type="evidence" value="ECO:0007669"/>
    <property type="project" value="UniProtKB-UniRule"/>
</dbReference>
<dbReference type="CDD" id="cd00520">
    <property type="entry name" value="RRF"/>
    <property type="match status" value="1"/>
</dbReference>
<dbReference type="FunFam" id="1.10.132.20:FF:000001">
    <property type="entry name" value="Ribosome-recycling factor"/>
    <property type="match status" value="1"/>
</dbReference>
<dbReference type="FunFam" id="3.30.1360.40:FF:000001">
    <property type="entry name" value="Ribosome-recycling factor"/>
    <property type="match status" value="1"/>
</dbReference>
<dbReference type="Gene3D" id="3.30.1360.40">
    <property type="match status" value="1"/>
</dbReference>
<dbReference type="Gene3D" id="1.10.132.20">
    <property type="entry name" value="Ribosome-recycling factor"/>
    <property type="match status" value="1"/>
</dbReference>
<dbReference type="HAMAP" id="MF_00040">
    <property type="entry name" value="RRF"/>
    <property type="match status" value="1"/>
</dbReference>
<dbReference type="InterPro" id="IPR002661">
    <property type="entry name" value="Ribosome_recyc_fac"/>
</dbReference>
<dbReference type="InterPro" id="IPR023584">
    <property type="entry name" value="Ribosome_recyc_fac_dom"/>
</dbReference>
<dbReference type="InterPro" id="IPR036191">
    <property type="entry name" value="RRF_sf"/>
</dbReference>
<dbReference type="NCBIfam" id="TIGR00496">
    <property type="entry name" value="frr"/>
    <property type="match status" value="1"/>
</dbReference>
<dbReference type="PANTHER" id="PTHR20982:SF3">
    <property type="entry name" value="MITOCHONDRIAL RIBOSOME RECYCLING FACTOR PSEUDO 1"/>
    <property type="match status" value="1"/>
</dbReference>
<dbReference type="PANTHER" id="PTHR20982">
    <property type="entry name" value="RIBOSOME RECYCLING FACTOR"/>
    <property type="match status" value="1"/>
</dbReference>
<dbReference type="Pfam" id="PF01765">
    <property type="entry name" value="RRF"/>
    <property type="match status" value="1"/>
</dbReference>
<dbReference type="SUPFAM" id="SSF55194">
    <property type="entry name" value="Ribosome recycling factor, RRF"/>
    <property type="match status" value="1"/>
</dbReference>
<keyword id="KW-0963">Cytoplasm</keyword>
<keyword id="KW-0648">Protein biosynthesis</keyword>
<comment type="function">
    <text evidence="1">Responsible for the release of ribosomes from messenger RNA at the termination of protein biosynthesis. May increase the efficiency of translation by recycling ribosomes from one round of translation to another.</text>
</comment>
<comment type="subcellular location">
    <subcellularLocation>
        <location evidence="1">Cytoplasm</location>
    </subcellularLocation>
</comment>
<comment type="similarity">
    <text evidence="1">Belongs to the RRF family.</text>
</comment>
<name>RRF_MYCSJ</name>
<protein>
    <recommendedName>
        <fullName evidence="1">Ribosome-recycling factor</fullName>
        <shortName evidence="1">RRF</shortName>
    </recommendedName>
    <alternativeName>
        <fullName evidence="1">Ribosome-releasing factor</fullName>
    </alternativeName>
</protein>
<feature type="chain" id="PRO_1000003202" description="Ribosome-recycling factor">
    <location>
        <begin position="1"/>
        <end position="185"/>
    </location>
</feature>
<feature type="region of interest" description="Disordered" evidence="2">
    <location>
        <begin position="145"/>
        <end position="164"/>
    </location>
</feature>
<organism>
    <name type="scientific">Mycobacterium sp. (strain JLS)</name>
    <dbReference type="NCBI Taxonomy" id="164757"/>
    <lineage>
        <taxon>Bacteria</taxon>
        <taxon>Bacillati</taxon>
        <taxon>Actinomycetota</taxon>
        <taxon>Actinomycetes</taxon>
        <taxon>Mycobacteriales</taxon>
        <taxon>Mycobacteriaceae</taxon>
        <taxon>Mycobacterium</taxon>
    </lineage>
</organism>
<reference key="1">
    <citation type="submission" date="2007-02" db="EMBL/GenBank/DDBJ databases">
        <title>Complete sequence of Mycobacterium sp. JLS.</title>
        <authorList>
            <consortium name="US DOE Joint Genome Institute"/>
            <person name="Copeland A."/>
            <person name="Lucas S."/>
            <person name="Lapidus A."/>
            <person name="Barry K."/>
            <person name="Detter J.C."/>
            <person name="Glavina del Rio T."/>
            <person name="Hammon N."/>
            <person name="Israni S."/>
            <person name="Dalin E."/>
            <person name="Tice H."/>
            <person name="Pitluck S."/>
            <person name="Chain P."/>
            <person name="Malfatti S."/>
            <person name="Shin M."/>
            <person name="Vergez L."/>
            <person name="Schmutz J."/>
            <person name="Larimer F."/>
            <person name="Land M."/>
            <person name="Hauser L."/>
            <person name="Kyrpides N."/>
            <person name="Mikhailova N."/>
            <person name="Miller C.D."/>
            <person name="Anderson A.J."/>
            <person name="Sims R.C."/>
            <person name="Richardson P."/>
        </authorList>
    </citation>
    <scope>NUCLEOTIDE SEQUENCE [LARGE SCALE GENOMIC DNA]</scope>
    <source>
        <strain>JLS</strain>
    </source>
</reference>
<proteinExistence type="inferred from homology"/>
<accession>A3PXZ5</accession>